<comment type="function">
    <text evidence="1">Involved in the import of GDP-mannose from the cytoplasm into the Golgi lumen.</text>
</comment>
<comment type="subunit">
    <text evidence="1">Homooligomer.</text>
</comment>
<comment type="subcellular location">
    <subcellularLocation>
        <location evidence="1">Golgi apparatus membrane</location>
        <topology evidence="1">Multi-pass membrane protein</topology>
    </subcellularLocation>
    <subcellularLocation>
        <location evidence="1">Cytoplasmic vesicle membrane</location>
        <topology evidence="1">Multi-pass membrane protein</topology>
    </subcellularLocation>
    <subcellularLocation>
        <location evidence="1">Endoplasmic reticulum membrane</location>
        <topology evidence="1">Multi-pass membrane protein</topology>
    </subcellularLocation>
</comment>
<comment type="similarity">
    <text evidence="4">Belongs to the TPT transporter family. SLC35D subfamily.</text>
</comment>
<evidence type="ECO:0000250" key="1"/>
<evidence type="ECO:0000255" key="2"/>
<evidence type="ECO:0000256" key="3">
    <source>
        <dbReference type="SAM" id="MobiDB-lite"/>
    </source>
</evidence>
<evidence type="ECO:0000305" key="4"/>
<protein>
    <recommendedName>
        <fullName>GDP-mannose transporter</fullName>
        <shortName>GMT</shortName>
    </recommendedName>
</protein>
<dbReference type="EMBL" id="AM270393">
    <property type="protein sequence ID" value="CAL00557.1"/>
    <property type="molecule type" value="Genomic_DNA"/>
</dbReference>
<dbReference type="RefSeq" id="XP_001398443.1">
    <property type="nucleotide sequence ID" value="XM_001398406.2"/>
</dbReference>
<dbReference type="SMR" id="A2R9P4"/>
<dbReference type="EnsemblFungi" id="CAL00557">
    <property type="protein sequence ID" value="CAL00557"/>
    <property type="gene ID" value="An17g02140"/>
</dbReference>
<dbReference type="GeneID" id="4989537"/>
<dbReference type="KEGG" id="ang:An17g02140"/>
<dbReference type="VEuPathDB" id="FungiDB:An17g02140"/>
<dbReference type="HOGENOM" id="CLU_025360_1_2_1"/>
<dbReference type="Proteomes" id="UP000006706">
    <property type="component" value="Chromosome 5L"/>
</dbReference>
<dbReference type="GO" id="GO:0030659">
    <property type="term" value="C:cytoplasmic vesicle membrane"/>
    <property type="evidence" value="ECO:0007669"/>
    <property type="project" value="UniProtKB-SubCell"/>
</dbReference>
<dbReference type="GO" id="GO:0005789">
    <property type="term" value="C:endoplasmic reticulum membrane"/>
    <property type="evidence" value="ECO:0007669"/>
    <property type="project" value="UniProtKB-SubCell"/>
</dbReference>
<dbReference type="GO" id="GO:0000139">
    <property type="term" value="C:Golgi membrane"/>
    <property type="evidence" value="ECO:0007669"/>
    <property type="project" value="UniProtKB-SubCell"/>
</dbReference>
<dbReference type="GO" id="GO:0005458">
    <property type="term" value="F:GDP-mannose transmembrane transporter activity"/>
    <property type="evidence" value="ECO:0007669"/>
    <property type="project" value="EnsemblFungi"/>
</dbReference>
<dbReference type="InterPro" id="IPR013657">
    <property type="entry name" value="SCL35B1-4/HUT1"/>
</dbReference>
<dbReference type="InterPro" id="IPR050186">
    <property type="entry name" value="TPT_transporter"/>
</dbReference>
<dbReference type="NCBIfam" id="TIGR00803">
    <property type="entry name" value="nst"/>
    <property type="match status" value="1"/>
</dbReference>
<dbReference type="PANTHER" id="PTHR11132">
    <property type="entry name" value="SOLUTE CARRIER FAMILY 35"/>
    <property type="match status" value="1"/>
</dbReference>
<dbReference type="Pfam" id="PF08449">
    <property type="entry name" value="UAA"/>
    <property type="match status" value="1"/>
</dbReference>
<dbReference type="SUPFAM" id="SSF103481">
    <property type="entry name" value="Multidrug resistance efflux transporter EmrE"/>
    <property type="match status" value="1"/>
</dbReference>
<sequence length="381" mass="41550">MAEGKKTDDYTIQMDSIDQGNKSFEAPPPPQPRSPPSGSLSNNPILPVLAYCGSSILMTVMNKYVLSGTDFNLNFFLLCIQSLVCIIAIQTCKSCGLITYRDFSADEARKWFPITLLLIGMIYTGSKALQFLSIPVYTIFKNLTIILIAYGEVLWFGGSVTGLTLFSFGLMVLSSIIAAWADIKHAVESNGDATAKVSTLNAGYIWMLVNCLCTSSYVLGMRKRIKLTNFKDFDTMFYNNLLSIPVLIVLSAFLEDWSSTNVNRNFPPMDRNSIVFAMILSGLSSVFISYTSAWCVRVTSSTTYSMVGALNKLPIAISGLIFFDAPVTFPSVSAIVVGFVSGIVYAVAKIKQNAKPRTGVLPTANPPVSASSQSMRDSLRS</sequence>
<keyword id="KW-0968">Cytoplasmic vesicle</keyword>
<keyword id="KW-0256">Endoplasmic reticulum</keyword>
<keyword id="KW-0333">Golgi apparatus</keyword>
<keyword id="KW-0472">Membrane</keyword>
<keyword id="KW-1185">Reference proteome</keyword>
<keyword id="KW-0762">Sugar transport</keyword>
<keyword id="KW-0812">Transmembrane</keyword>
<keyword id="KW-1133">Transmembrane helix</keyword>
<keyword id="KW-0813">Transport</keyword>
<name>GMT_ASPNC</name>
<proteinExistence type="inferred from homology"/>
<feature type="chain" id="PRO_0000333511" description="GDP-mannose transporter">
    <location>
        <begin position="1"/>
        <end position="381"/>
    </location>
</feature>
<feature type="topological domain" description="Cytoplasmic" evidence="1">
    <location>
        <begin position="1"/>
        <end position="44"/>
    </location>
</feature>
<feature type="transmembrane region" description="Helical" evidence="2">
    <location>
        <begin position="45"/>
        <end position="65"/>
    </location>
</feature>
<feature type="topological domain" description="Lumenal" evidence="1">
    <location>
        <begin position="66"/>
        <end position="70"/>
    </location>
</feature>
<feature type="transmembrane region" description="Helical" evidence="2">
    <location>
        <begin position="71"/>
        <end position="91"/>
    </location>
</feature>
<feature type="topological domain" description="Cytoplasmic" evidence="1">
    <location>
        <begin position="92"/>
        <end position="109"/>
    </location>
</feature>
<feature type="transmembrane region" description="Helical" evidence="2">
    <location>
        <begin position="110"/>
        <end position="126"/>
    </location>
</feature>
<feature type="topological domain" description="Lumenal" evidence="1">
    <location>
        <begin position="127"/>
        <end position="133"/>
    </location>
</feature>
<feature type="transmembrane region" description="Helical" evidence="2">
    <location>
        <begin position="134"/>
        <end position="150"/>
    </location>
</feature>
<feature type="topological domain" description="Cytoplasmic" evidence="1">
    <location>
        <begin position="151"/>
        <end position="159"/>
    </location>
</feature>
<feature type="transmembrane region" description="Helical" evidence="2">
    <location>
        <begin position="160"/>
        <end position="181"/>
    </location>
</feature>
<feature type="topological domain" description="Lumenal" evidence="1">
    <location>
        <begin position="182"/>
        <end position="199"/>
    </location>
</feature>
<feature type="transmembrane region" description="Helical" evidence="2">
    <location>
        <begin position="200"/>
        <end position="220"/>
    </location>
</feature>
<feature type="topological domain" description="Cytoplasmic" evidence="1">
    <location>
        <begin position="221"/>
        <end position="234"/>
    </location>
</feature>
<feature type="transmembrane region" description="Helical" evidence="2">
    <location>
        <begin position="235"/>
        <end position="255"/>
    </location>
</feature>
<feature type="topological domain" description="Lumenal" evidence="1">
    <location>
        <begin position="256"/>
        <end position="273"/>
    </location>
</feature>
<feature type="transmembrane region" description="Helical" evidence="2">
    <location>
        <begin position="274"/>
        <end position="294"/>
    </location>
</feature>
<feature type="topological domain" description="Cytoplasmic" evidence="1">
    <location>
        <begin position="295"/>
        <end position="302"/>
    </location>
</feature>
<feature type="transmembrane region" description="Helical" evidence="2">
    <location>
        <begin position="303"/>
        <end position="323"/>
    </location>
</feature>
<feature type="topological domain" description="Lumenal" evidence="1">
    <location>
        <begin position="324"/>
        <end position="326"/>
    </location>
</feature>
<feature type="transmembrane region" description="Helical" evidence="2">
    <location>
        <begin position="327"/>
        <end position="347"/>
    </location>
</feature>
<feature type="topological domain" description="Cytoplasmic" evidence="1">
    <location>
        <begin position="348"/>
        <end position="381"/>
    </location>
</feature>
<feature type="region of interest" description="Disordered" evidence="3">
    <location>
        <begin position="19"/>
        <end position="41"/>
    </location>
</feature>
<feature type="region of interest" description="Disordered" evidence="3">
    <location>
        <begin position="358"/>
        <end position="381"/>
    </location>
</feature>
<feature type="compositionally biased region" description="Pro residues" evidence="3">
    <location>
        <begin position="26"/>
        <end position="35"/>
    </location>
</feature>
<feature type="compositionally biased region" description="Polar residues" evidence="3">
    <location>
        <begin position="366"/>
        <end position="381"/>
    </location>
</feature>
<organism>
    <name type="scientific">Aspergillus niger (strain ATCC MYA-4892 / CBS 513.88 / FGSC A1513)</name>
    <dbReference type="NCBI Taxonomy" id="425011"/>
    <lineage>
        <taxon>Eukaryota</taxon>
        <taxon>Fungi</taxon>
        <taxon>Dikarya</taxon>
        <taxon>Ascomycota</taxon>
        <taxon>Pezizomycotina</taxon>
        <taxon>Eurotiomycetes</taxon>
        <taxon>Eurotiomycetidae</taxon>
        <taxon>Eurotiales</taxon>
        <taxon>Aspergillaceae</taxon>
        <taxon>Aspergillus</taxon>
        <taxon>Aspergillus subgen. Circumdati</taxon>
    </lineage>
</organism>
<accession>A2R9P4</accession>
<gene>
    <name type="primary">gmt1</name>
    <name type="synonym">vrg4</name>
    <name type="ORF">An17g02140</name>
</gene>
<reference key="1">
    <citation type="journal article" date="2007" name="Nat. Biotechnol.">
        <title>Genome sequencing and analysis of the versatile cell factory Aspergillus niger CBS 513.88.</title>
        <authorList>
            <person name="Pel H.J."/>
            <person name="de Winde J.H."/>
            <person name="Archer D.B."/>
            <person name="Dyer P.S."/>
            <person name="Hofmann G."/>
            <person name="Schaap P.J."/>
            <person name="Turner G."/>
            <person name="de Vries R.P."/>
            <person name="Albang R."/>
            <person name="Albermann K."/>
            <person name="Andersen M.R."/>
            <person name="Bendtsen J.D."/>
            <person name="Benen J.A.E."/>
            <person name="van den Berg M."/>
            <person name="Breestraat S."/>
            <person name="Caddick M.X."/>
            <person name="Contreras R."/>
            <person name="Cornell M."/>
            <person name="Coutinho P.M."/>
            <person name="Danchin E.G.J."/>
            <person name="Debets A.J.M."/>
            <person name="Dekker P."/>
            <person name="van Dijck P.W.M."/>
            <person name="van Dijk A."/>
            <person name="Dijkhuizen L."/>
            <person name="Driessen A.J.M."/>
            <person name="d'Enfert C."/>
            <person name="Geysens S."/>
            <person name="Goosen C."/>
            <person name="Groot G.S.P."/>
            <person name="de Groot P.W.J."/>
            <person name="Guillemette T."/>
            <person name="Henrissat B."/>
            <person name="Herweijer M."/>
            <person name="van den Hombergh J.P.T.W."/>
            <person name="van den Hondel C.A.M.J.J."/>
            <person name="van der Heijden R.T.J.M."/>
            <person name="van der Kaaij R.M."/>
            <person name="Klis F.M."/>
            <person name="Kools H.J."/>
            <person name="Kubicek C.P."/>
            <person name="van Kuyk P.A."/>
            <person name="Lauber J."/>
            <person name="Lu X."/>
            <person name="van der Maarel M.J.E.C."/>
            <person name="Meulenberg R."/>
            <person name="Menke H."/>
            <person name="Mortimer M.A."/>
            <person name="Nielsen J."/>
            <person name="Oliver S.G."/>
            <person name="Olsthoorn M."/>
            <person name="Pal K."/>
            <person name="van Peij N.N.M.E."/>
            <person name="Ram A.F.J."/>
            <person name="Rinas U."/>
            <person name="Roubos J.A."/>
            <person name="Sagt C.M.J."/>
            <person name="Schmoll M."/>
            <person name="Sun J."/>
            <person name="Ussery D."/>
            <person name="Varga J."/>
            <person name="Vervecken W."/>
            <person name="van de Vondervoort P.J.J."/>
            <person name="Wedler H."/>
            <person name="Woesten H.A.B."/>
            <person name="Zeng A.-P."/>
            <person name="van Ooyen A.J.J."/>
            <person name="Visser J."/>
            <person name="Stam H."/>
        </authorList>
    </citation>
    <scope>NUCLEOTIDE SEQUENCE [LARGE SCALE GENOMIC DNA]</scope>
    <source>
        <strain>ATCC MYA-4892 / CBS 513.88 / FGSC A1513</strain>
    </source>
</reference>